<protein>
    <recommendedName>
        <fullName evidence="1">Small ribosomal subunit protein uS9</fullName>
    </recommendedName>
    <alternativeName>
        <fullName evidence="2">30S ribosomal protein S9</fullName>
    </alternativeName>
</protein>
<proteinExistence type="inferred from homology"/>
<comment type="similarity">
    <text evidence="1">Belongs to the universal ribosomal protein uS9 family.</text>
</comment>
<accession>A0K4K6</accession>
<dbReference type="EMBL" id="CP000458">
    <property type="protein sequence ID" value="ABK07433.1"/>
    <property type="molecule type" value="Genomic_DNA"/>
</dbReference>
<dbReference type="RefSeq" id="WP_006476904.1">
    <property type="nucleotide sequence ID" value="NC_008542.1"/>
</dbReference>
<dbReference type="SMR" id="A0K4K6"/>
<dbReference type="GeneID" id="93139380"/>
<dbReference type="KEGG" id="bch:Bcen2424_0680"/>
<dbReference type="HOGENOM" id="CLU_046483_2_1_4"/>
<dbReference type="GO" id="GO:0022627">
    <property type="term" value="C:cytosolic small ribosomal subunit"/>
    <property type="evidence" value="ECO:0007669"/>
    <property type="project" value="TreeGrafter"/>
</dbReference>
<dbReference type="GO" id="GO:0003723">
    <property type="term" value="F:RNA binding"/>
    <property type="evidence" value="ECO:0007669"/>
    <property type="project" value="TreeGrafter"/>
</dbReference>
<dbReference type="GO" id="GO:0003735">
    <property type="term" value="F:structural constituent of ribosome"/>
    <property type="evidence" value="ECO:0007669"/>
    <property type="project" value="InterPro"/>
</dbReference>
<dbReference type="GO" id="GO:0006412">
    <property type="term" value="P:translation"/>
    <property type="evidence" value="ECO:0007669"/>
    <property type="project" value="UniProtKB-UniRule"/>
</dbReference>
<dbReference type="FunFam" id="3.30.230.10:FF:000001">
    <property type="entry name" value="30S ribosomal protein S9"/>
    <property type="match status" value="1"/>
</dbReference>
<dbReference type="Gene3D" id="3.30.230.10">
    <property type="match status" value="1"/>
</dbReference>
<dbReference type="HAMAP" id="MF_00532_B">
    <property type="entry name" value="Ribosomal_uS9_B"/>
    <property type="match status" value="1"/>
</dbReference>
<dbReference type="InterPro" id="IPR020568">
    <property type="entry name" value="Ribosomal_Su5_D2-typ_SF"/>
</dbReference>
<dbReference type="InterPro" id="IPR000754">
    <property type="entry name" value="Ribosomal_uS9"/>
</dbReference>
<dbReference type="InterPro" id="IPR023035">
    <property type="entry name" value="Ribosomal_uS9_bac/plastid"/>
</dbReference>
<dbReference type="InterPro" id="IPR020574">
    <property type="entry name" value="Ribosomal_uS9_CS"/>
</dbReference>
<dbReference type="InterPro" id="IPR014721">
    <property type="entry name" value="Ribsml_uS5_D2-typ_fold_subgr"/>
</dbReference>
<dbReference type="NCBIfam" id="NF001099">
    <property type="entry name" value="PRK00132.1"/>
    <property type="match status" value="1"/>
</dbReference>
<dbReference type="PANTHER" id="PTHR21569">
    <property type="entry name" value="RIBOSOMAL PROTEIN S9"/>
    <property type="match status" value="1"/>
</dbReference>
<dbReference type="PANTHER" id="PTHR21569:SF1">
    <property type="entry name" value="SMALL RIBOSOMAL SUBUNIT PROTEIN US9M"/>
    <property type="match status" value="1"/>
</dbReference>
<dbReference type="Pfam" id="PF00380">
    <property type="entry name" value="Ribosomal_S9"/>
    <property type="match status" value="1"/>
</dbReference>
<dbReference type="SUPFAM" id="SSF54211">
    <property type="entry name" value="Ribosomal protein S5 domain 2-like"/>
    <property type="match status" value="1"/>
</dbReference>
<dbReference type="PROSITE" id="PS00360">
    <property type="entry name" value="RIBOSOMAL_S9"/>
    <property type="match status" value="1"/>
</dbReference>
<name>RS9_BURCH</name>
<keyword id="KW-0687">Ribonucleoprotein</keyword>
<keyword id="KW-0689">Ribosomal protein</keyword>
<sequence length="130" mass="14316">MIGNWNYGTGRRKSAVARVFIKAGKGDIIVNGKPIADYFSRETSLMIVRQPLELTNHGQTFDIKVNVNGGGETGQAGAVRHGITRALIDYDATLKPSLSSAGFVTRDAREVERKKVGLRKARRAKQFSKR</sequence>
<organism>
    <name type="scientific">Burkholderia cenocepacia (strain HI2424)</name>
    <dbReference type="NCBI Taxonomy" id="331272"/>
    <lineage>
        <taxon>Bacteria</taxon>
        <taxon>Pseudomonadati</taxon>
        <taxon>Pseudomonadota</taxon>
        <taxon>Betaproteobacteria</taxon>
        <taxon>Burkholderiales</taxon>
        <taxon>Burkholderiaceae</taxon>
        <taxon>Burkholderia</taxon>
        <taxon>Burkholderia cepacia complex</taxon>
    </lineage>
</organism>
<feature type="chain" id="PRO_1000051181" description="Small ribosomal subunit protein uS9">
    <location>
        <begin position="1"/>
        <end position="130"/>
    </location>
</feature>
<gene>
    <name evidence="1" type="primary">rpsI</name>
    <name type="ordered locus">Bcen2424_0680</name>
</gene>
<evidence type="ECO:0000255" key="1">
    <source>
        <dbReference type="HAMAP-Rule" id="MF_00532"/>
    </source>
</evidence>
<evidence type="ECO:0000305" key="2"/>
<reference key="1">
    <citation type="submission" date="2006-08" db="EMBL/GenBank/DDBJ databases">
        <title>Complete sequence of chromosome 1 of Burkholderia cenocepacia HI2424.</title>
        <authorList>
            <person name="Copeland A."/>
            <person name="Lucas S."/>
            <person name="Lapidus A."/>
            <person name="Barry K."/>
            <person name="Detter J.C."/>
            <person name="Glavina del Rio T."/>
            <person name="Hammon N."/>
            <person name="Israni S."/>
            <person name="Pitluck S."/>
            <person name="Chain P."/>
            <person name="Malfatti S."/>
            <person name="Shin M."/>
            <person name="Vergez L."/>
            <person name="Schmutz J."/>
            <person name="Larimer F."/>
            <person name="Land M."/>
            <person name="Hauser L."/>
            <person name="Kyrpides N."/>
            <person name="Kim E."/>
            <person name="LiPuma J.J."/>
            <person name="Gonzalez C.F."/>
            <person name="Konstantinidis K."/>
            <person name="Tiedje J.M."/>
            <person name="Richardson P."/>
        </authorList>
    </citation>
    <scope>NUCLEOTIDE SEQUENCE [LARGE SCALE GENOMIC DNA]</scope>
    <source>
        <strain>HI2424</strain>
    </source>
</reference>